<name>PTR53_ARATH</name>
<gene>
    <name type="primary">NPF2.11</name>
    <name type="synonym">GTR2</name>
    <name type="synonym">NRT1.10</name>
    <name type="ordered locus">At5g62680</name>
    <name type="ORF">MRG21.10</name>
</gene>
<keyword id="KW-1003">Cell membrane</keyword>
<keyword id="KW-0472">Membrane</keyword>
<keyword id="KW-1185">Reference proteome</keyword>
<keyword id="KW-0812">Transmembrane</keyword>
<keyword id="KW-1133">Transmembrane helix</keyword>
<keyword id="KW-0813">Transport</keyword>
<dbReference type="EMBL" id="AB020751">
    <property type="protein sequence ID" value="BAA97215.1"/>
    <property type="molecule type" value="Genomic_DNA"/>
</dbReference>
<dbReference type="EMBL" id="CP002688">
    <property type="protein sequence ID" value="AED97642.1"/>
    <property type="molecule type" value="Genomic_DNA"/>
</dbReference>
<dbReference type="EMBL" id="AK316918">
    <property type="protein sequence ID" value="BAH19623.1"/>
    <property type="molecule type" value="mRNA"/>
</dbReference>
<dbReference type="RefSeq" id="NP_201074.1">
    <property type="nucleotide sequence ID" value="NM_125663.4"/>
</dbReference>
<dbReference type="SMR" id="Q9LV10"/>
<dbReference type="FunCoup" id="Q9LV10">
    <property type="interactions" value="311"/>
</dbReference>
<dbReference type="STRING" id="3702.Q9LV10"/>
<dbReference type="TCDB" id="2.A.17.3.20">
    <property type="family name" value="the proton-dependent oligopeptide transporter (pot/ptr) family"/>
</dbReference>
<dbReference type="iPTMnet" id="Q9LV10"/>
<dbReference type="PaxDb" id="3702-AT5G62680.1"/>
<dbReference type="ProteomicsDB" id="226446"/>
<dbReference type="EnsemblPlants" id="AT5G62680.1">
    <property type="protein sequence ID" value="AT5G62680.1"/>
    <property type="gene ID" value="AT5G62680"/>
</dbReference>
<dbReference type="GeneID" id="836389"/>
<dbReference type="Gramene" id="AT5G62680.1">
    <property type="protein sequence ID" value="AT5G62680.1"/>
    <property type="gene ID" value="AT5G62680"/>
</dbReference>
<dbReference type="KEGG" id="ath:AT5G62680"/>
<dbReference type="Araport" id="AT5G62680"/>
<dbReference type="TAIR" id="AT5G62680">
    <property type="gene designation" value="NPF2.11"/>
</dbReference>
<dbReference type="eggNOG" id="KOG1237">
    <property type="taxonomic scope" value="Eukaryota"/>
</dbReference>
<dbReference type="HOGENOM" id="CLU_009313_4_2_1"/>
<dbReference type="InParanoid" id="Q9LV10"/>
<dbReference type="OMA" id="KPAKQPW"/>
<dbReference type="OrthoDB" id="8904098at2759"/>
<dbReference type="PhylomeDB" id="Q9LV10"/>
<dbReference type="PRO" id="PR:Q9LV10"/>
<dbReference type="Proteomes" id="UP000006548">
    <property type="component" value="Chromosome 5"/>
</dbReference>
<dbReference type="ExpressionAtlas" id="Q9LV10">
    <property type="expression patterns" value="baseline and differential"/>
</dbReference>
<dbReference type="GO" id="GO:0005886">
    <property type="term" value="C:plasma membrane"/>
    <property type="evidence" value="ECO:0000314"/>
    <property type="project" value="TAIR"/>
</dbReference>
<dbReference type="GO" id="GO:0009506">
    <property type="term" value="C:plasmodesma"/>
    <property type="evidence" value="ECO:0007005"/>
    <property type="project" value="TAIR"/>
</dbReference>
<dbReference type="GO" id="GO:0090448">
    <property type="term" value="F:glucosinolate:proton symporter activity"/>
    <property type="evidence" value="ECO:0000314"/>
    <property type="project" value="TAIR"/>
</dbReference>
<dbReference type="GO" id="GO:1901349">
    <property type="term" value="P:glucosinolate transport"/>
    <property type="evidence" value="ECO:0000314"/>
    <property type="project" value="TAIR"/>
</dbReference>
<dbReference type="GO" id="GO:0090449">
    <property type="term" value="P:phloem glucosinolate loading"/>
    <property type="evidence" value="ECO:0000315"/>
    <property type="project" value="TAIR"/>
</dbReference>
<dbReference type="CDD" id="cd17416">
    <property type="entry name" value="MFS_NPF1_2"/>
    <property type="match status" value="1"/>
</dbReference>
<dbReference type="Gene3D" id="1.20.1250.20">
    <property type="entry name" value="MFS general substrate transporter like domains"/>
    <property type="match status" value="1"/>
</dbReference>
<dbReference type="InterPro" id="IPR036259">
    <property type="entry name" value="MFS_trans_sf"/>
</dbReference>
<dbReference type="InterPro" id="IPR000109">
    <property type="entry name" value="POT_fam"/>
</dbReference>
<dbReference type="PANTHER" id="PTHR11654">
    <property type="entry name" value="OLIGOPEPTIDE TRANSPORTER-RELATED"/>
    <property type="match status" value="1"/>
</dbReference>
<dbReference type="Pfam" id="PF00854">
    <property type="entry name" value="PTR2"/>
    <property type="match status" value="1"/>
</dbReference>
<dbReference type="SUPFAM" id="SSF103473">
    <property type="entry name" value="MFS general substrate transporter"/>
    <property type="match status" value="1"/>
</dbReference>
<proteinExistence type="evidence at protein level"/>
<feature type="chain" id="PRO_0000399987" description="Protein NRT1/ PTR FAMILY 2.11">
    <location>
        <begin position="1"/>
        <end position="616"/>
    </location>
</feature>
<feature type="transmembrane region" description="Helical" evidence="1">
    <location>
        <begin position="59"/>
        <end position="79"/>
    </location>
</feature>
<feature type="transmembrane region" description="Helical" evidence="1">
    <location>
        <begin position="87"/>
        <end position="107"/>
    </location>
</feature>
<feature type="transmembrane region" description="Helical" evidence="1">
    <location>
        <begin position="118"/>
        <end position="138"/>
    </location>
</feature>
<feature type="transmembrane region" description="Helical" evidence="1">
    <location>
        <begin position="159"/>
        <end position="179"/>
    </location>
</feature>
<feature type="transmembrane region" description="Helical" evidence="1">
    <location>
        <begin position="205"/>
        <end position="225"/>
    </location>
</feature>
<feature type="transmembrane region" description="Helical" evidence="1">
    <location>
        <begin position="233"/>
        <end position="253"/>
    </location>
</feature>
<feature type="transmembrane region" description="Helical" evidence="1">
    <location>
        <begin position="349"/>
        <end position="369"/>
    </location>
</feature>
<feature type="transmembrane region" description="Helical" evidence="1">
    <location>
        <begin position="392"/>
        <end position="412"/>
    </location>
</feature>
<feature type="transmembrane region" description="Helical" evidence="1">
    <location>
        <begin position="435"/>
        <end position="455"/>
    </location>
</feature>
<feature type="transmembrane region" description="Helical" evidence="1">
    <location>
        <begin position="483"/>
        <end position="503"/>
    </location>
</feature>
<feature type="transmembrane region" description="Helical" evidence="1">
    <location>
        <begin position="519"/>
        <end position="539"/>
    </location>
</feature>
<feature type="transmembrane region" description="Helical" evidence="1">
    <location>
        <begin position="566"/>
        <end position="586"/>
    </location>
</feature>
<feature type="region of interest" description="Disordered" evidence="2">
    <location>
        <begin position="1"/>
        <end position="22"/>
    </location>
</feature>
<accession>Q9LV10</accession>
<protein>
    <recommendedName>
        <fullName>Protein NRT1/ PTR FAMILY 2.11</fullName>
        <shortName>AtNPF2.11</shortName>
    </recommendedName>
    <alternativeName>
        <fullName>Nitrate transporter 1.10</fullName>
    </alternativeName>
    <alternativeName>
        <fullName>Protein GLUCOSINOLATE TRANSPORTER-2</fullName>
    </alternativeName>
</protein>
<comment type="function">
    <text evidence="4 5">High-affinity, proton-dependent glucosinolate-specific transporter. Involved in apoplasmic phloem-loading of glucosinolates and in bidirectional long-distance transport of aliphatic but not indole glucosinolates. May be involved in removal of glucosinolates from the xylem in roots.</text>
</comment>
<comment type="biophysicochemical properties">
    <kinetics>
        <KM evidence="4">18.7 uM for 4-methylthiobutyl glucosinolate</KM>
    </kinetics>
</comment>
<comment type="subcellular location">
    <subcellularLocation>
        <location evidence="4">Cell membrane</location>
        <topology evidence="4">Multi-pass membrane protein</topology>
    </subcellularLocation>
</comment>
<comment type="tissue specificity">
    <text evidence="3 4 5">Expressed in roots. Detected in shoots, stems and flowers. Expressed in veins and in the root vasculature with highest expression in lateral branching points.</text>
</comment>
<comment type="disruption phenotype">
    <text evidence="4">48% reduction in total glucosinolate levels in seeds. Gtr1 and gtr2 double mutant has no detectable glucosinolate in seeds.</text>
</comment>
<comment type="similarity">
    <text evidence="6">Belongs to the major facilitator superfamily. Proton-dependent oligopeptide transporter (POT/PTR) (TC 2.A.17) family.</text>
</comment>
<sequence>MERKPLELESTDNHQNPSSAVYGGSVTAVDSVEEDVQNQKKVVYRGWKVMPFIIGNETFEKLGIIGTLSNLLVYLTAVFNLKSITAATIINAFSGTINFGTFVAAFLCDTYFGRYKTLSVAVIACFLGSFVILLTAAVPQLHPAACGTAADSICNGPSGGQIAFLLMGLGFLVVGAGGIRPCNLAFGADQFNPKSESGKRGIDSFFNWYFFTFTFAQILSLTLVVYVQSNVSWTIGLTIPAVLMFLACLIFFAGDKLYVKIKASGSPLAGIAQVIAVAIKKRGLKPAKQPWLNLYNYYPPKYANSKLKYTDQFRFLDKAAILTPEDKLQPDGKPADPWKLCTMQQVEEVKCIVRVLPIWFASSIYYLTITQQMTYPVFQALQSDRRLGSGGFVIPAATYVVFLMTGMTVFIVVYDRVLVPTMRRITGLDTGITLLQRIGTGIFFATASLVVAGFVEERRRTFALTKPTLGMAPRKGEISSMSAMWLIPQLSLAGVAEAFAAIGQMEFYYKQFPENMRSFAGSIFYVGGGVSSYLGSFLIATVHRTTQNSSGGNWLAEDLNKGRLDLFYFMIAGILAVNFAYFLVMSRWYRYKGSDDEVTTYETNENIIKQQDKNVA</sequence>
<reference key="1">
    <citation type="journal article" date="2000" name="DNA Res.">
        <title>Structural analysis of Arabidopsis thaliana chromosome 5. X. Sequence features of the regions of 3,076,755 bp covered by sixty P1 and TAC clones.</title>
        <authorList>
            <person name="Sato S."/>
            <person name="Nakamura Y."/>
            <person name="Kaneko T."/>
            <person name="Katoh T."/>
            <person name="Asamizu E."/>
            <person name="Kotani H."/>
            <person name="Tabata S."/>
        </authorList>
    </citation>
    <scope>NUCLEOTIDE SEQUENCE [LARGE SCALE GENOMIC DNA]</scope>
    <source>
        <strain>cv. Columbia</strain>
    </source>
</reference>
<reference key="2">
    <citation type="journal article" date="2017" name="Plant J.">
        <title>Araport11: a complete reannotation of the Arabidopsis thaliana reference genome.</title>
        <authorList>
            <person name="Cheng C.Y."/>
            <person name="Krishnakumar V."/>
            <person name="Chan A.P."/>
            <person name="Thibaud-Nissen F."/>
            <person name="Schobel S."/>
            <person name="Town C.D."/>
        </authorList>
    </citation>
    <scope>GENOME REANNOTATION</scope>
    <source>
        <strain>cv. Columbia</strain>
    </source>
</reference>
<reference key="3">
    <citation type="journal article" date="2009" name="DNA Res.">
        <title>Analysis of multiple occurrences of alternative splicing events in Arabidopsis thaliana using novel sequenced full-length cDNAs.</title>
        <authorList>
            <person name="Iida K."/>
            <person name="Fukami-Kobayashi K."/>
            <person name="Toyoda A."/>
            <person name="Sakaki Y."/>
            <person name="Kobayashi M."/>
            <person name="Seki M."/>
            <person name="Shinozaki K."/>
        </authorList>
    </citation>
    <scope>NUCLEOTIDE SEQUENCE [LARGE SCALE MRNA]</scope>
    <source>
        <strain>cv. Columbia</strain>
    </source>
</reference>
<reference key="4">
    <citation type="journal article" date="2007" name="FEBS Lett.">
        <title>Nitrate transporters and peptide transporters.</title>
        <authorList>
            <person name="Tsay Y.F."/>
            <person name="Chiu C.C."/>
            <person name="Tsai C.B."/>
            <person name="Ho C.H."/>
            <person name="Hsu P.K."/>
        </authorList>
    </citation>
    <scope>TISSUE SPECIFICITY</scope>
    <scope>GENE FAMILY</scope>
</reference>
<reference key="5">
    <citation type="journal article" date="2010" name="Plant Cell">
        <title>The Arabidopsis nitrate transporter NRT1.8 functions in nitrate removal from the xylem sap and mediates cadmium tolerance.</title>
        <authorList>
            <person name="Li J.Y."/>
            <person name="Fu Y.L."/>
            <person name="Pike S.M."/>
            <person name="Bao J."/>
            <person name="Tian W."/>
            <person name="Zhang Y."/>
            <person name="Chen C.Z."/>
            <person name="Zhang Y."/>
            <person name="Li H.M."/>
            <person name="Huang J."/>
            <person name="Li L.G."/>
            <person name="Schroeder J.I."/>
            <person name="Gassmann W."/>
            <person name="Gong J.M."/>
        </authorList>
    </citation>
    <scope>GENE FAMILY</scope>
</reference>
<reference key="6">
    <citation type="journal article" date="2012" name="Nature">
        <title>NRT/PTR transporters are essential for translocation of glucosinolate defence compounds to seeds.</title>
        <authorList>
            <person name="Nour-Eldin H.H."/>
            <person name="Andersen T.G."/>
            <person name="Burow M."/>
            <person name="Madsen S.R."/>
            <person name="Jorgensen M.E."/>
            <person name="Olsen C.E."/>
            <person name="Dreyer I."/>
            <person name="Hedrich R."/>
            <person name="Geiger D."/>
            <person name="Halkier B.A."/>
        </authorList>
    </citation>
    <scope>FUNCTION</scope>
    <scope>BIOPHYSICOCHEMICAL PROPERTIES</scope>
    <scope>DISRUPTION PHENOTYPE</scope>
    <scope>SUBCELLULAR LOCATION</scope>
    <scope>TISSUE SPECIFICITY</scope>
</reference>
<reference key="7">
    <citation type="journal article" date="2013" name="Plant Cell">
        <title>Integration of biosynthesis and long-distance transport establish organ-specific glucosinolate profiles in vegetative Arabidopsis.</title>
        <authorList>
            <person name="Andersen T.G."/>
            <person name="Nour-Eldin H.H."/>
            <person name="Fuller V.L."/>
            <person name="Olsen C.E."/>
            <person name="Burow M."/>
            <person name="Halkier B.A."/>
        </authorList>
    </citation>
    <scope>FUNCTION</scope>
    <scope>TISSUE SPECIFICITY</scope>
</reference>
<reference key="8">
    <citation type="journal article" date="2014" name="Trends Plant Sci.">
        <title>A unified nomenclature of NITRATE TRANSPORTER 1/PEPTIDE TRANSPORTER family members in plants.</title>
        <authorList>
            <person name="Leran S."/>
            <person name="Varala K."/>
            <person name="Boyer J.C."/>
            <person name="Chiurazzi M."/>
            <person name="Crawford N."/>
            <person name="Daniel-Vedele F."/>
            <person name="David L."/>
            <person name="Dickstein R."/>
            <person name="Fernandez E."/>
            <person name="Forde B."/>
            <person name="Gassmann W."/>
            <person name="Geiger D."/>
            <person name="Gojon A."/>
            <person name="Gong J.M."/>
            <person name="Halkier B.A."/>
            <person name="Harris J.M."/>
            <person name="Hedrich R."/>
            <person name="Limami A.M."/>
            <person name="Rentsch D."/>
            <person name="Seo M."/>
            <person name="Tsay Y.F."/>
            <person name="Zhang M."/>
            <person name="Coruzzi G."/>
            <person name="Lacombe B."/>
        </authorList>
    </citation>
    <scope>GENE FAMILY</scope>
    <scope>NOMENCLATURE</scope>
</reference>
<organism>
    <name type="scientific">Arabidopsis thaliana</name>
    <name type="common">Mouse-ear cress</name>
    <dbReference type="NCBI Taxonomy" id="3702"/>
    <lineage>
        <taxon>Eukaryota</taxon>
        <taxon>Viridiplantae</taxon>
        <taxon>Streptophyta</taxon>
        <taxon>Embryophyta</taxon>
        <taxon>Tracheophyta</taxon>
        <taxon>Spermatophyta</taxon>
        <taxon>Magnoliopsida</taxon>
        <taxon>eudicotyledons</taxon>
        <taxon>Gunneridae</taxon>
        <taxon>Pentapetalae</taxon>
        <taxon>rosids</taxon>
        <taxon>malvids</taxon>
        <taxon>Brassicales</taxon>
        <taxon>Brassicaceae</taxon>
        <taxon>Camelineae</taxon>
        <taxon>Arabidopsis</taxon>
    </lineage>
</organism>
<evidence type="ECO:0000255" key="1"/>
<evidence type="ECO:0000256" key="2">
    <source>
        <dbReference type="SAM" id="MobiDB-lite"/>
    </source>
</evidence>
<evidence type="ECO:0000269" key="3">
    <source>
    </source>
</evidence>
<evidence type="ECO:0000269" key="4">
    <source>
    </source>
</evidence>
<evidence type="ECO:0000269" key="5">
    <source>
    </source>
</evidence>
<evidence type="ECO:0000305" key="6"/>